<evidence type="ECO:0000255" key="1">
    <source>
        <dbReference type="HAMAP-Rule" id="MF_01855"/>
    </source>
</evidence>
<accession>Q8D275</accession>
<reference key="1">
    <citation type="journal article" date="2002" name="Nat. Genet.">
        <title>Genome sequence of the endocellular obligate symbiont of tsetse flies, Wigglesworthia glossinidia.</title>
        <authorList>
            <person name="Akman L."/>
            <person name="Yamashita A."/>
            <person name="Watanabe H."/>
            <person name="Oshima K."/>
            <person name="Shiba T."/>
            <person name="Hattori M."/>
            <person name="Aksoy S."/>
        </authorList>
    </citation>
    <scope>NUCLEOTIDE SEQUENCE [LARGE SCALE GENOMIC DNA]</scope>
</reference>
<gene>
    <name evidence="1" type="primary">fbp</name>
    <name type="ordered locus">WIGBR4790</name>
</gene>
<feature type="chain" id="PRO_0000364746" description="Fructose-1,6-bisphosphatase class 1">
    <location>
        <begin position="1"/>
        <end position="328"/>
    </location>
</feature>
<feature type="binding site" evidence="1">
    <location>
        <position position="89"/>
    </location>
    <ligand>
        <name>Mg(2+)</name>
        <dbReference type="ChEBI" id="CHEBI:18420"/>
        <label>1</label>
    </ligand>
</feature>
<feature type="binding site" evidence="1">
    <location>
        <position position="110"/>
    </location>
    <ligand>
        <name>Mg(2+)</name>
        <dbReference type="ChEBI" id="CHEBI:18420"/>
        <label>1</label>
    </ligand>
</feature>
<feature type="binding site" evidence="1">
    <location>
        <position position="110"/>
    </location>
    <ligand>
        <name>Mg(2+)</name>
        <dbReference type="ChEBI" id="CHEBI:18420"/>
        <label>2</label>
    </ligand>
</feature>
<feature type="binding site" evidence="1">
    <location>
        <position position="112"/>
    </location>
    <ligand>
        <name>Mg(2+)</name>
        <dbReference type="ChEBI" id="CHEBI:18420"/>
        <label>1</label>
    </ligand>
</feature>
<feature type="binding site" evidence="1">
    <location>
        <position position="113"/>
    </location>
    <ligand>
        <name>Mg(2+)</name>
        <dbReference type="ChEBI" id="CHEBI:18420"/>
        <label>2</label>
    </ligand>
</feature>
<feature type="binding site" evidence="1">
    <location>
        <position position="206"/>
    </location>
    <ligand>
        <name>substrate</name>
    </ligand>
</feature>
<feature type="binding site" evidence="1">
    <location>
        <position position="234"/>
    </location>
    <ligand>
        <name>substrate</name>
    </ligand>
</feature>
<feature type="binding site" evidence="1">
    <location>
        <begin position="252"/>
        <end position="254"/>
    </location>
    <ligand>
        <name>substrate</name>
    </ligand>
</feature>
<feature type="binding site" evidence="1">
    <location>
        <position position="264"/>
    </location>
    <ligand>
        <name>substrate</name>
    </ligand>
</feature>
<feature type="binding site" evidence="1">
    <location>
        <position position="270"/>
    </location>
    <ligand>
        <name>Mg(2+)</name>
        <dbReference type="ChEBI" id="CHEBI:18420"/>
        <label>2</label>
    </ligand>
</feature>
<dbReference type="EC" id="3.1.3.11" evidence="1"/>
<dbReference type="EMBL" id="BA000021">
    <property type="protein sequence ID" value="BAC24625.1"/>
    <property type="molecule type" value="Genomic_DNA"/>
</dbReference>
<dbReference type="SMR" id="Q8D275"/>
<dbReference type="STRING" id="36870.gene:10368983"/>
<dbReference type="KEGG" id="wbr:fbp"/>
<dbReference type="eggNOG" id="COG0158">
    <property type="taxonomic scope" value="Bacteria"/>
</dbReference>
<dbReference type="HOGENOM" id="CLU_039977_2_2_6"/>
<dbReference type="OrthoDB" id="9806756at2"/>
<dbReference type="UniPathway" id="UPA00138"/>
<dbReference type="Proteomes" id="UP000000562">
    <property type="component" value="Chromosome"/>
</dbReference>
<dbReference type="GO" id="GO:0005829">
    <property type="term" value="C:cytosol"/>
    <property type="evidence" value="ECO:0007669"/>
    <property type="project" value="TreeGrafter"/>
</dbReference>
<dbReference type="GO" id="GO:0042132">
    <property type="term" value="F:fructose 1,6-bisphosphate 1-phosphatase activity"/>
    <property type="evidence" value="ECO:0007669"/>
    <property type="project" value="UniProtKB-UniRule"/>
</dbReference>
<dbReference type="GO" id="GO:0000287">
    <property type="term" value="F:magnesium ion binding"/>
    <property type="evidence" value="ECO:0007669"/>
    <property type="project" value="UniProtKB-UniRule"/>
</dbReference>
<dbReference type="GO" id="GO:0030388">
    <property type="term" value="P:fructose 1,6-bisphosphate metabolic process"/>
    <property type="evidence" value="ECO:0007669"/>
    <property type="project" value="TreeGrafter"/>
</dbReference>
<dbReference type="GO" id="GO:0006002">
    <property type="term" value="P:fructose 6-phosphate metabolic process"/>
    <property type="evidence" value="ECO:0007669"/>
    <property type="project" value="TreeGrafter"/>
</dbReference>
<dbReference type="GO" id="GO:0006000">
    <property type="term" value="P:fructose metabolic process"/>
    <property type="evidence" value="ECO:0007669"/>
    <property type="project" value="TreeGrafter"/>
</dbReference>
<dbReference type="GO" id="GO:0006094">
    <property type="term" value="P:gluconeogenesis"/>
    <property type="evidence" value="ECO:0007669"/>
    <property type="project" value="UniProtKB-UniRule"/>
</dbReference>
<dbReference type="GO" id="GO:0005986">
    <property type="term" value="P:sucrose biosynthetic process"/>
    <property type="evidence" value="ECO:0007669"/>
    <property type="project" value="TreeGrafter"/>
</dbReference>
<dbReference type="CDD" id="cd00354">
    <property type="entry name" value="FBPase"/>
    <property type="match status" value="1"/>
</dbReference>
<dbReference type="FunFam" id="3.30.540.10:FF:000002">
    <property type="entry name" value="Fructose-1,6-bisphosphatase class 1"/>
    <property type="match status" value="1"/>
</dbReference>
<dbReference type="Gene3D" id="3.40.190.80">
    <property type="match status" value="1"/>
</dbReference>
<dbReference type="Gene3D" id="3.30.540.10">
    <property type="entry name" value="Fructose-1,6-Bisphosphatase, subunit A, domain 1"/>
    <property type="match status" value="1"/>
</dbReference>
<dbReference type="HAMAP" id="MF_01855">
    <property type="entry name" value="FBPase_class1"/>
    <property type="match status" value="1"/>
</dbReference>
<dbReference type="InterPro" id="IPR044015">
    <property type="entry name" value="FBPase_C_dom"/>
</dbReference>
<dbReference type="InterPro" id="IPR000146">
    <property type="entry name" value="FBPase_class-1"/>
</dbReference>
<dbReference type="InterPro" id="IPR033391">
    <property type="entry name" value="FBPase_N"/>
</dbReference>
<dbReference type="InterPro" id="IPR028343">
    <property type="entry name" value="FBPtase"/>
</dbReference>
<dbReference type="NCBIfam" id="NF006778">
    <property type="entry name" value="PRK09293.1-1"/>
    <property type="match status" value="1"/>
</dbReference>
<dbReference type="PANTHER" id="PTHR11556">
    <property type="entry name" value="FRUCTOSE-1,6-BISPHOSPHATASE-RELATED"/>
    <property type="match status" value="1"/>
</dbReference>
<dbReference type="PANTHER" id="PTHR11556:SF35">
    <property type="entry name" value="SEDOHEPTULOSE-1,7-BISPHOSPHATASE, CHLOROPLASTIC"/>
    <property type="match status" value="1"/>
</dbReference>
<dbReference type="Pfam" id="PF00316">
    <property type="entry name" value="FBPase"/>
    <property type="match status" value="1"/>
</dbReference>
<dbReference type="Pfam" id="PF18913">
    <property type="entry name" value="FBPase_C"/>
    <property type="match status" value="1"/>
</dbReference>
<dbReference type="PIRSF" id="PIRSF500210">
    <property type="entry name" value="FBPtase"/>
    <property type="match status" value="1"/>
</dbReference>
<dbReference type="PIRSF" id="PIRSF000904">
    <property type="entry name" value="FBPtase_SBPase"/>
    <property type="match status" value="1"/>
</dbReference>
<dbReference type="PRINTS" id="PR00115">
    <property type="entry name" value="F16BPHPHTASE"/>
</dbReference>
<dbReference type="SUPFAM" id="SSF56655">
    <property type="entry name" value="Carbohydrate phosphatase"/>
    <property type="match status" value="1"/>
</dbReference>
<protein>
    <recommendedName>
        <fullName evidence="1">Fructose-1,6-bisphosphatase class 1</fullName>
        <shortName evidence="1">FBPase class 1</shortName>
        <ecNumber evidence="1">3.1.3.11</ecNumber>
    </recommendedName>
    <alternativeName>
        <fullName evidence="1">D-fructose-1,6-bisphosphate 1-phosphohydrolase class 1</fullName>
    </alternativeName>
</protein>
<organism>
    <name type="scientific">Wigglesworthia glossinidia brevipalpis</name>
    <dbReference type="NCBI Taxonomy" id="36870"/>
    <lineage>
        <taxon>Bacteria</taxon>
        <taxon>Pseudomonadati</taxon>
        <taxon>Pseudomonadota</taxon>
        <taxon>Gammaproteobacteria</taxon>
        <taxon>Enterobacterales</taxon>
        <taxon>Erwiniaceae</taxon>
        <taxon>Wigglesworthia</taxon>
    </lineage>
</organism>
<name>F16PA_WIGBR</name>
<comment type="catalytic activity">
    <reaction evidence="1">
        <text>beta-D-fructose 1,6-bisphosphate + H2O = beta-D-fructose 6-phosphate + phosphate</text>
        <dbReference type="Rhea" id="RHEA:11064"/>
        <dbReference type="ChEBI" id="CHEBI:15377"/>
        <dbReference type="ChEBI" id="CHEBI:32966"/>
        <dbReference type="ChEBI" id="CHEBI:43474"/>
        <dbReference type="ChEBI" id="CHEBI:57634"/>
        <dbReference type="EC" id="3.1.3.11"/>
    </reaction>
</comment>
<comment type="cofactor">
    <cofactor evidence="1">
        <name>Mg(2+)</name>
        <dbReference type="ChEBI" id="CHEBI:18420"/>
    </cofactor>
    <text evidence="1">Binds 2 magnesium ions per subunit.</text>
</comment>
<comment type="pathway">
    <text evidence="1">Carbohydrate biosynthesis; gluconeogenesis.</text>
</comment>
<comment type="subunit">
    <text evidence="1">Homotetramer.</text>
</comment>
<comment type="subcellular location">
    <subcellularLocation>
        <location evidence="1">Cytoplasm</location>
    </subcellularLocation>
</comment>
<comment type="similarity">
    <text evidence="1">Belongs to the FBPase class 1 family.</text>
</comment>
<proteinExistence type="inferred from homology"/>
<sequence>MISLREFIFSNNVNKYISKEDLYSLFIIIELTSKIIHNYIILNNITRIKQEKIKKNIHGEHQTKLDLLSNKKFIDMIKTHYNIAGIASEEEAKFISFKQEKYGKYIFLIDPLDGSLSADCNTPVGTIFSLYCRVTPIGVEISEKDFLQPGNKQILSGYILYGSSTILVFTVKSGVHIFTYHPFFSTFFLSKKNFNYPKKNNIYSINEANYNNFSLGIKKYIMSCKSNNNISSRYTGSLVADFHRNLIKGGIYLYPNTKIYKHGKLRLMYECNPIALISSQANGSSSDGNINILDINPKILHQCSPFFVGTKSMVKLVNKFILGYYNHN</sequence>
<keyword id="KW-0119">Carbohydrate metabolism</keyword>
<keyword id="KW-0963">Cytoplasm</keyword>
<keyword id="KW-0378">Hydrolase</keyword>
<keyword id="KW-0460">Magnesium</keyword>
<keyword id="KW-0479">Metal-binding</keyword>
<keyword id="KW-1185">Reference proteome</keyword>